<keyword id="KW-0028">Amino-acid biosynthesis</keyword>
<keyword id="KW-0067">ATP-binding</keyword>
<keyword id="KW-0418">Kinase</keyword>
<keyword id="KW-0486">Methionine biosynthesis</keyword>
<keyword id="KW-0547">Nucleotide-binding</keyword>
<keyword id="KW-0808">Transferase</keyword>
<comment type="function">
    <text evidence="1">Catalyzes the phosphorylation of methylthioribose into methylthioribose-1-phosphate.</text>
</comment>
<comment type="catalytic activity">
    <reaction evidence="1">
        <text>5-(methylsulfanyl)-D-ribose + ATP = 5-(methylsulfanyl)-alpha-D-ribose 1-phosphate + ADP + H(+)</text>
        <dbReference type="Rhea" id="RHEA:22312"/>
        <dbReference type="ChEBI" id="CHEBI:15378"/>
        <dbReference type="ChEBI" id="CHEBI:30616"/>
        <dbReference type="ChEBI" id="CHEBI:58533"/>
        <dbReference type="ChEBI" id="CHEBI:78440"/>
        <dbReference type="ChEBI" id="CHEBI:456216"/>
        <dbReference type="EC" id="2.7.1.100"/>
    </reaction>
</comment>
<comment type="pathway">
    <text evidence="1">Amino-acid biosynthesis; L-methionine biosynthesis via salvage pathway; S-methyl-5-thio-alpha-D-ribose 1-phosphate from S-methyl-5'-thioadenosine (hydrolase route): step 2/2.</text>
</comment>
<comment type="subunit">
    <text evidence="1">Homodimer.</text>
</comment>
<comment type="similarity">
    <text evidence="1">Belongs to the methylthioribose kinase family.</text>
</comment>
<protein>
    <recommendedName>
        <fullName evidence="1">Methylthioribose kinase</fullName>
        <shortName evidence="1">MTR kinase</shortName>
        <ecNumber evidence="1">2.7.1.100</ecNumber>
    </recommendedName>
</protein>
<name>MTNK_BACC2</name>
<proteinExistence type="inferred from homology"/>
<accession>B7IWE5</accession>
<feature type="chain" id="PRO_1000187399" description="Methylthioribose kinase">
    <location>
        <begin position="1"/>
        <end position="393"/>
    </location>
</feature>
<feature type="binding site" evidence="1">
    <location>
        <position position="38"/>
    </location>
    <ligand>
        <name>ATP</name>
        <dbReference type="ChEBI" id="CHEBI:30616"/>
    </ligand>
</feature>
<feature type="binding site" evidence="1">
    <location>
        <position position="53"/>
    </location>
    <ligand>
        <name>ATP</name>
        <dbReference type="ChEBI" id="CHEBI:30616"/>
    </ligand>
</feature>
<feature type="binding site" evidence="1">
    <location>
        <begin position="107"/>
        <end position="109"/>
    </location>
    <ligand>
        <name>ATP</name>
        <dbReference type="ChEBI" id="CHEBI:30616"/>
    </ligand>
</feature>
<feature type="binding site" evidence="1">
    <location>
        <position position="225"/>
    </location>
    <ligand>
        <name>substrate</name>
    </ligand>
</feature>
<feature type="binding site" evidence="1">
    <location>
        <begin position="242"/>
        <end position="244"/>
    </location>
    <ligand>
        <name>ATP</name>
        <dbReference type="ChEBI" id="CHEBI:30616"/>
    </ligand>
</feature>
<feature type="binding site" evidence="1">
    <location>
        <position position="332"/>
    </location>
    <ligand>
        <name>substrate</name>
    </ligand>
</feature>
<evidence type="ECO:0000255" key="1">
    <source>
        <dbReference type="HAMAP-Rule" id="MF_01683"/>
    </source>
</evidence>
<organism>
    <name type="scientific">Bacillus cereus (strain G9842)</name>
    <dbReference type="NCBI Taxonomy" id="405531"/>
    <lineage>
        <taxon>Bacteria</taxon>
        <taxon>Bacillati</taxon>
        <taxon>Bacillota</taxon>
        <taxon>Bacilli</taxon>
        <taxon>Bacillales</taxon>
        <taxon>Bacillaceae</taxon>
        <taxon>Bacillus</taxon>
        <taxon>Bacillus cereus group</taxon>
    </lineage>
</organism>
<sequence>MGYYSLTEITAVQYAKDHGYFEAKANVVCHEIGDGNLNYVFKLDDGEKSIIIKQALPYAKVVGESWPLSIKRATIESKALQIFAQYVPDYVPAVYSHDEELAITVIEDLSRLTITRKGLIGGEEYPLLSQHIGRFLAHVLFYTSDFGLQSEEKRVLEGTFVNPDLCKITEDLVFTDPFGHYDTNDYEPDLQLVVDELWSDKTLKLKVAQYKYKFLTRKETLIHGDLHTGSIFSSPSETKVIDPEFATYGPFGFDIGQFIANLLLNALSREEEKRSVLFFHIEKTWSYFVETFTKLWIGEGVEVYTKEKQWLPIILQNIFTDAVGFAGCELIRRTIGLAHVADLDEIENKETRIQAKKQALSLGKELIKYESKSADIQLFRTLFQQTVSGGVKA</sequence>
<reference key="1">
    <citation type="submission" date="2008-10" db="EMBL/GenBank/DDBJ databases">
        <title>Genome sequence of Bacillus cereus G9842.</title>
        <authorList>
            <person name="Dodson R.J."/>
            <person name="Durkin A.S."/>
            <person name="Rosovitz M.J."/>
            <person name="Rasko D.A."/>
            <person name="Hoffmaster A."/>
            <person name="Ravel J."/>
            <person name="Sutton G."/>
        </authorList>
    </citation>
    <scope>NUCLEOTIDE SEQUENCE [LARGE SCALE GENOMIC DNA]</scope>
    <source>
        <strain>G9842</strain>
    </source>
</reference>
<dbReference type="EC" id="2.7.1.100" evidence="1"/>
<dbReference type="EMBL" id="CP001186">
    <property type="protein sequence ID" value="ACK93247.1"/>
    <property type="molecule type" value="Genomic_DNA"/>
</dbReference>
<dbReference type="RefSeq" id="WP_000542672.1">
    <property type="nucleotide sequence ID" value="NC_011772.1"/>
</dbReference>
<dbReference type="SMR" id="B7IWE5"/>
<dbReference type="KEGG" id="bcg:BCG9842_B1098"/>
<dbReference type="HOGENOM" id="CLU_033681_0_0_9"/>
<dbReference type="UniPathway" id="UPA00904">
    <property type="reaction ID" value="UER00872"/>
</dbReference>
<dbReference type="Proteomes" id="UP000006744">
    <property type="component" value="Chromosome"/>
</dbReference>
<dbReference type="GO" id="GO:0005524">
    <property type="term" value="F:ATP binding"/>
    <property type="evidence" value="ECO:0007669"/>
    <property type="project" value="UniProtKB-UniRule"/>
</dbReference>
<dbReference type="GO" id="GO:0046522">
    <property type="term" value="F:S-methyl-5-thioribose kinase activity"/>
    <property type="evidence" value="ECO:0007669"/>
    <property type="project" value="UniProtKB-UniRule"/>
</dbReference>
<dbReference type="GO" id="GO:0019509">
    <property type="term" value="P:L-methionine salvage from methylthioadenosine"/>
    <property type="evidence" value="ECO:0007669"/>
    <property type="project" value="UniProtKB-UniRule"/>
</dbReference>
<dbReference type="FunFam" id="3.90.1200.10:FF:000008">
    <property type="entry name" value="Methylthioribose kinase"/>
    <property type="match status" value="1"/>
</dbReference>
<dbReference type="Gene3D" id="3.90.1200.10">
    <property type="match status" value="1"/>
</dbReference>
<dbReference type="Gene3D" id="3.30.200.20">
    <property type="entry name" value="Phosphorylase Kinase, domain 1"/>
    <property type="match status" value="1"/>
</dbReference>
<dbReference type="HAMAP" id="MF_01683">
    <property type="entry name" value="Salvage_MtnK"/>
    <property type="match status" value="1"/>
</dbReference>
<dbReference type="InterPro" id="IPR002575">
    <property type="entry name" value="Aminoglycoside_PTrfase"/>
</dbReference>
<dbReference type="InterPro" id="IPR011009">
    <property type="entry name" value="Kinase-like_dom_sf"/>
</dbReference>
<dbReference type="InterPro" id="IPR009212">
    <property type="entry name" value="Methylthioribose_kinase"/>
</dbReference>
<dbReference type="NCBIfam" id="TIGR01767">
    <property type="entry name" value="MTRK"/>
    <property type="match status" value="1"/>
</dbReference>
<dbReference type="PANTHER" id="PTHR34273">
    <property type="entry name" value="METHYLTHIORIBOSE KINASE"/>
    <property type="match status" value="1"/>
</dbReference>
<dbReference type="PANTHER" id="PTHR34273:SF2">
    <property type="entry name" value="METHYLTHIORIBOSE KINASE"/>
    <property type="match status" value="1"/>
</dbReference>
<dbReference type="Pfam" id="PF01636">
    <property type="entry name" value="APH"/>
    <property type="match status" value="1"/>
</dbReference>
<dbReference type="PIRSF" id="PIRSF031134">
    <property type="entry name" value="MTRK"/>
    <property type="match status" value="1"/>
</dbReference>
<dbReference type="SUPFAM" id="SSF56112">
    <property type="entry name" value="Protein kinase-like (PK-like)"/>
    <property type="match status" value="1"/>
</dbReference>
<gene>
    <name evidence="1" type="primary">mtnK</name>
    <name type="ordered locus">BCG9842_B1098</name>
</gene>